<protein>
    <recommendedName>
        <fullName evidence="1">UDP-N-acetylglucosamine--N-acetylmuramyl-(pentapeptide) pyrophosphoryl-undecaprenol N-acetylglucosamine transferase</fullName>
        <ecNumber evidence="1">2.4.1.227</ecNumber>
    </recommendedName>
    <alternativeName>
        <fullName evidence="1">Undecaprenyl-PP-MurNAc-pentapeptide-UDPGlcNAc GlcNAc transferase</fullName>
    </alternativeName>
</protein>
<organism>
    <name type="scientific">Coxiella burnetii (strain CbuK_Q154)</name>
    <name type="common">Coxiella burnetii (strain Q154)</name>
    <dbReference type="NCBI Taxonomy" id="434924"/>
    <lineage>
        <taxon>Bacteria</taxon>
        <taxon>Pseudomonadati</taxon>
        <taxon>Pseudomonadota</taxon>
        <taxon>Gammaproteobacteria</taxon>
        <taxon>Legionellales</taxon>
        <taxon>Coxiellaceae</taxon>
        <taxon>Coxiella</taxon>
    </lineage>
</organism>
<evidence type="ECO:0000255" key="1">
    <source>
        <dbReference type="HAMAP-Rule" id="MF_00033"/>
    </source>
</evidence>
<dbReference type="EC" id="2.4.1.227" evidence="1"/>
<dbReference type="EMBL" id="CP001020">
    <property type="protein sequence ID" value="ACJ21029.1"/>
    <property type="molecule type" value="Genomic_DNA"/>
</dbReference>
<dbReference type="RefSeq" id="WP_005769484.1">
    <property type="nucleotide sequence ID" value="NC_011528.1"/>
</dbReference>
<dbReference type="SMR" id="B6J5K3"/>
<dbReference type="CAZy" id="GT28">
    <property type="family name" value="Glycosyltransferase Family 28"/>
</dbReference>
<dbReference type="KEGG" id="cbc:CbuK_1919"/>
<dbReference type="HOGENOM" id="CLU_037404_2_0_6"/>
<dbReference type="UniPathway" id="UPA00219"/>
<dbReference type="GO" id="GO:0005886">
    <property type="term" value="C:plasma membrane"/>
    <property type="evidence" value="ECO:0007669"/>
    <property type="project" value="UniProtKB-SubCell"/>
</dbReference>
<dbReference type="GO" id="GO:0051991">
    <property type="term" value="F:UDP-N-acetyl-D-glucosamine:N-acetylmuramoyl-L-alanyl-D-glutamyl-meso-2,6-diaminopimelyl-D-alanyl-D-alanine-diphosphoundecaprenol 4-beta-N-acetylglucosaminlytransferase activity"/>
    <property type="evidence" value="ECO:0007669"/>
    <property type="project" value="RHEA"/>
</dbReference>
<dbReference type="GO" id="GO:0050511">
    <property type="term" value="F:undecaprenyldiphospho-muramoylpentapeptide beta-N-acetylglucosaminyltransferase activity"/>
    <property type="evidence" value="ECO:0007669"/>
    <property type="project" value="UniProtKB-UniRule"/>
</dbReference>
<dbReference type="GO" id="GO:0005975">
    <property type="term" value="P:carbohydrate metabolic process"/>
    <property type="evidence" value="ECO:0007669"/>
    <property type="project" value="InterPro"/>
</dbReference>
<dbReference type="GO" id="GO:0051301">
    <property type="term" value="P:cell division"/>
    <property type="evidence" value="ECO:0007669"/>
    <property type="project" value="UniProtKB-KW"/>
</dbReference>
<dbReference type="GO" id="GO:0071555">
    <property type="term" value="P:cell wall organization"/>
    <property type="evidence" value="ECO:0007669"/>
    <property type="project" value="UniProtKB-KW"/>
</dbReference>
<dbReference type="GO" id="GO:0030259">
    <property type="term" value="P:lipid glycosylation"/>
    <property type="evidence" value="ECO:0007669"/>
    <property type="project" value="UniProtKB-UniRule"/>
</dbReference>
<dbReference type="GO" id="GO:0009252">
    <property type="term" value="P:peptidoglycan biosynthetic process"/>
    <property type="evidence" value="ECO:0007669"/>
    <property type="project" value="UniProtKB-UniRule"/>
</dbReference>
<dbReference type="GO" id="GO:0008360">
    <property type="term" value="P:regulation of cell shape"/>
    <property type="evidence" value="ECO:0007669"/>
    <property type="project" value="UniProtKB-KW"/>
</dbReference>
<dbReference type="CDD" id="cd03785">
    <property type="entry name" value="GT28_MurG"/>
    <property type="match status" value="1"/>
</dbReference>
<dbReference type="Gene3D" id="3.40.50.2000">
    <property type="entry name" value="Glycogen Phosphorylase B"/>
    <property type="match status" value="2"/>
</dbReference>
<dbReference type="HAMAP" id="MF_00033">
    <property type="entry name" value="MurG"/>
    <property type="match status" value="1"/>
</dbReference>
<dbReference type="InterPro" id="IPR006009">
    <property type="entry name" value="GlcNAc_MurG"/>
</dbReference>
<dbReference type="InterPro" id="IPR007235">
    <property type="entry name" value="Glyco_trans_28_C"/>
</dbReference>
<dbReference type="InterPro" id="IPR004276">
    <property type="entry name" value="GlycoTrans_28_N"/>
</dbReference>
<dbReference type="NCBIfam" id="TIGR01133">
    <property type="entry name" value="murG"/>
    <property type="match status" value="1"/>
</dbReference>
<dbReference type="PANTHER" id="PTHR21015:SF22">
    <property type="entry name" value="GLYCOSYLTRANSFERASE"/>
    <property type="match status" value="1"/>
</dbReference>
<dbReference type="PANTHER" id="PTHR21015">
    <property type="entry name" value="UDP-N-ACETYLGLUCOSAMINE--N-ACETYLMURAMYL-(PENTAPEPTIDE) PYROPHOSPHORYL-UNDECAPRENOL N-ACETYLGLUCOSAMINE TRANSFERASE 1"/>
    <property type="match status" value="1"/>
</dbReference>
<dbReference type="Pfam" id="PF04101">
    <property type="entry name" value="Glyco_tran_28_C"/>
    <property type="match status" value="1"/>
</dbReference>
<dbReference type="Pfam" id="PF03033">
    <property type="entry name" value="Glyco_transf_28"/>
    <property type="match status" value="1"/>
</dbReference>
<dbReference type="SUPFAM" id="SSF53756">
    <property type="entry name" value="UDP-Glycosyltransferase/glycogen phosphorylase"/>
    <property type="match status" value="1"/>
</dbReference>
<name>MURG_COXB1</name>
<proteinExistence type="inferred from homology"/>
<reference key="1">
    <citation type="journal article" date="2009" name="Infect. Immun.">
        <title>Comparative genomics reveal extensive transposon-mediated genomic plasticity and diversity among potential effector proteins within the genus Coxiella.</title>
        <authorList>
            <person name="Beare P.A."/>
            <person name="Unsworth N."/>
            <person name="Andoh M."/>
            <person name="Voth D.E."/>
            <person name="Omsland A."/>
            <person name="Gilk S.D."/>
            <person name="Williams K.P."/>
            <person name="Sobral B.W."/>
            <person name="Kupko J.J. III"/>
            <person name="Porcella S.F."/>
            <person name="Samuel J.E."/>
            <person name="Heinzen R.A."/>
        </authorList>
    </citation>
    <scope>NUCLEOTIDE SEQUENCE [LARGE SCALE GENOMIC DNA]</scope>
    <source>
        <strain>CbuK_Q154</strain>
    </source>
</reference>
<feature type="chain" id="PRO_1000090424" description="UDP-N-acetylglucosamine--N-acetylmuramyl-(pentapeptide) pyrophosphoryl-undecaprenol N-acetylglucosamine transferase">
    <location>
        <begin position="1"/>
        <end position="358"/>
    </location>
</feature>
<feature type="binding site" evidence="1">
    <location>
        <begin position="11"/>
        <end position="13"/>
    </location>
    <ligand>
        <name>UDP-N-acetyl-alpha-D-glucosamine</name>
        <dbReference type="ChEBI" id="CHEBI:57705"/>
    </ligand>
</feature>
<feature type="binding site" evidence="1">
    <location>
        <position position="122"/>
    </location>
    <ligand>
        <name>UDP-N-acetyl-alpha-D-glucosamine</name>
        <dbReference type="ChEBI" id="CHEBI:57705"/>
    </ligand>
</feature>
<feature type="binding site" evidence="1">
    <location>
        <position position="161"/>
    </location>
    <ligand>
        <name>UDP-N-acetyl-alpha-D-glucosamine</name>
        <dbReference type="ChEBI" id="CHEBI:57705"/>
    </ligand>
</feature>
<feature type="binding site" evidence="1">
    <location>
        <position position="189"/>
    </location>
    <ligand>
        <name>UDP-N-acetyl-alpha-D-glucosamine</name>
        <dbReference type="ChEBI" id="CHEBI:57705"/>
    </ligand>
</feature>
<feature type="binding site" evidence="1">
    <location>
        <position position="243"/>
    </location>
    <ligand>
        <name>UDP-N-acetyl-alpha-D-glucosamine</name>
        <dbReference type="ChEBI" id="CHEBI:57705"/>
    </ligand>
</feature>
<feature type="binding site" evidence="1">
    <location>
        <begin position="262"/>
        <end position="267"/>
    </location>
    <ligand>
        <name>UDP-N-acetyl-alpha-D-glucosamine</name>
        <dbReference type="ChEBI" id="CHEBI:57705"/>
    </ligand>
</feature>
<feature type="binding site" evidence="1">
    <location>
        <position position="288"/>
    </location>
    <ligand>
        <name>UDP-N-acetyl-alpha-D-glucosamine</name>
        <dbReference type="ChEBI" id="CHEBI:57705"/>
    </ligand>
</feature>
<keyword id="KW-0131">Cell cycle</keyword>
<keyword id="KW-0132">Cell division</keyword>
<keyword id="KW-0997">Cell inner membrane</keyword>
<keyword id="KW-1003">Cell membrane</keyword>
<keyword id="KW-0133">Cell shape</keyword>
<keyword id="KW-0961">Cell wall biogenesis/degradation</keyword>
<keyword id="KW-0328">Glycosyltransferase</keyword>
<keyword id="KW-0472">Membrane</keyword>
<keyword id="KW-0573">Peptidoglycan synthesis</keyword>
<keyword id="KW-0808">Transferase</keyword>
<accession>B6J5K3</accession>
<gene>
    <name evidence="1" type="primary">murG</name>
    <name type="ordered locus">CbuK_1919</name>
</gene>
<comment type="function">
    <text evidence="1">Cell wall formation. Catalyzes the transfer of a GlcNAc subunit on undecaprenyl-pyrophosphoryl-MurNAc-pentapeptide (lipid intermediate I) to form undecaprenyl-pyrophosphoryl-MurNAc-(pentapeptide)GlcNAc (lipid intermediate II).</text>
</comment>
<comment type="catalytic activity">
    <reaction evidence="1">
        <text>di-trans,octa-cis-undecaprenyl diphospho-N-acetyl-alpha-D-muramoyl-L-alanyl-D-glutamyl-meso-2,6-diaminopimeloyl-D-alanyl-D-alanine + UDP-N-acetyl-alpha-D-glucosamine = di-trans,octa-cis-undecaprenyl diphospho-[N-acetyl-alpha-D-glucosaminyl-(1-&gt;4)]-N-acetyl-alpha-D-muramoyl-L-alanyl-D-glutamyl-meso-2,6-diaminopimeloyl-D-alanyl-D-alanine + UDP + H(+)</text>
        <dbReference type="Rhea" id="RHEA:31227"/>
        <dbReference type="ChEBI" id="CHEBI:15378"/>
        <dbReference type="ChEBI" id="CHEBI:57705"/>
        <dbReference type="ChEBI" id="CHEBI:58223"/>
        <dbReference type="ChEBI" id="CHEBI:61387"/>
        <dbReference type="ChEBI" id="CHEBI:61388"/>
        <dbReference type="EC" id="2.4.1.227"/>
    </reaction>
</comment>
<comment type="pathway">
    <text evidence="1">Cell wall biogenesis; peptidoglycan biosynthesis.</text>
</comment>
<comment type="subcellular location">
    <subcellularLocation>
        <location evidence="1">Cell inner membrane</location>
        <topology evidence="1">Peripheral membrane protein</topology>
        <orientation evidence="1">Cytoplasmic side</orientation>
    </subcellularLocation>
</comment>
<comment type="similarity">
    <text evidence="1">Belongs to the glycosyltransferase 28 family. MurG subfamily.</text>
</comment>
<sequence>MNRILIIAGGTGGHIFPALAVARELREQEVDVQWLGVKGGLEEKLVPDSFPLHLIQIKAFRGKRGLQQLLMPLRLVRAVFQAYRIIRQFKPDVILGMGGYVAGPGGLAAWITRTPLIIHEQNSIPGLTNRVLAKMAKFILQGFPDTFPQNRKVITTGNPVRTELVKMPLPQVRLAARRGPLRILVLGGSQGARSINQKMLAALSSYPRSEEIAVWHQTGQRDFEFIQKEYEKIKIEAKVDNFISDMAGAYGWADLVVCRAGALTVCEIASVGVASIFIPYPHAVDNHQFHNARFLEQAGAAIIISEESLTETDLMRWFEQFAQDRDRLLTMAENARKLAKPEAVQRVIAQCKKFYAAR</sequence>